<feature type="initiator methionine" description="Removed" evidence="3">
    <location>
        <position position="1"/>
    </location>
</feature>
<feature type="chain" id="PRO_0000052829" description="Hemoglobin subunit alpha-A">
    <location>
        <begin position="2"/>
        <end position="142"/>
    </location>
</feature>
<feature type="domain" description="Globin" evidence="2">
    <location>
        <begin position="2"/>
        <end position="142"/>
    </location>
</feature>
<feature type="binding site" description="distal binding residue" evidence="2">
    <location>
        <position position="59"/>
    </location>
    <ligand>
        <name>heme b</name>
        <dbReference type="ChEBI" id="CHEBI:60344"/>
    </ligand>
    <ligandPart>
        <name>Fe</name>
        <dbReference type="ChEBI" id="CHEBI:18248"/>
    </ligandPart>
</feature>
<feature type="binding site" description="proximal binding residue" evidence="2">
    <location>
        <position position="88"/>
    </location>
    <ligand>
        <name>heme b</name>
        <dbReference type="ChEBI" id="CHEBI:60344"/>
    </ligand>
    <ligandPart>
        <name>Fe</name>
        <dbReference type="ChEBI" id="CHEBI:18248"/>
    </ligandPart>
</feature>
<comment type="function">
    <text evidence="4">Involved in oxygen transport from the lung to the various peripheral tissues.</text>
</comment>
<comment type="subunit">
    <text>Heterotetramer of two alpha-A chains and two beta chains.</text>
</comment>
<comment type="tissue specificity">
    <text evidence="4">Red blood cells.</text>
</comment>
<comment type="similarity">
    <text evidence="2">Belongs to the globin family.</text>
</comment>
<protein>
    <recommendedName>
        <fullName>Hemoglobin subunit alpha-A</fullName>
    </recommendedName>
    <alternativeName>
        <fullName>Alpha-A-globin</fullName>
    </alternativeName>
    <alternativeName>
        <fullName>Hemoglobin alpha-A chain</fullName>
    </alternativeName>
</protein>
<reference evidence="4 5" key="1">
    <citation type="submission" date="2003-08" db="EMBL/GenBank/DDBJ databases">
        <title>Nucleotide sequences for globin genes (alpha A, alpha D, and beta) of the Galapagos giant tortoise, Geochelone nigra.</title>
        <authorList>
            <person name="Shishikura F."/>
        </authorList>
    </citation>
    <scope>NUCLEOTIDE SEQUENCE [GENOMIC DNA]</scope>
</reference>
<reference evidence="4 5" key="2">
    <citation type="submission" date="2001-10" db="UniProtKB">
        <title>A comparative study on hemoglobins from the two giant tortoises, Geochelone nigra and Geochelone gigantea.</title>
        <authorList>
            <person name="Shishikura F."/>
        </authorList>
    </citation>
    <scope>PROTEIN SEQUENCE OF 2-142</scope>
    <source>
        <tissue evidence="3">Erythrocyte</tissue>
    </source>
</reference>
<gene>
    <name evidence="1" type="primary">HBAA</name>
</gene>
<name>HBAA_CHENI</name>
<sequence length="142" mass="15752">MVLTAGDKANVKTVWSKVGSHLEEYGSETLERLFIVYPSTKTYFPHFDLHHDSAQVRAHGRKVLSALGEAVNHIDDIPGALSKLSDLHAQTLRVDPVNFKLLNLCFVVVVGRHHPTILTPEVHVSLDKFLSAVATALTSKYR</sequence>
<accession>P83135</accession>
<accession>Q60HV4</accession>
<keyword id="KW-0903">Direct protein sequencing</keyword>
<keyword id="KW-0349">Heme</keyword>
<keyword id="KW-0408">Iron</keyword>
<keyword id="KW-0479">Metal-binding</keyword>
<keyword id="KW-0561">Oxygen transport</keyword>
<keyword id="KW-0813">Transport</keyword>
<dbReference type="EMBL" id="AB116518">
    <property type="protein sequence ID" value="BAC81725.1"/>
    <property type="molecule type" value="Genomic_DNA"/>
</dbReference>
<dbReference type="SMR" id="P83135"/>
<dbReference type="GO" id="GO:0072562">
    <property type="term" value="C:blood microparticle"/>
    <property type="evidence" value="ECO:0007669"/>
    <property type="project" value="TreeGrafter"/>
</dbReference>
<dbReference type="GO" id="GO:0031838">
    <property type="term" value="C:haptoglobin-hemoglobin complex"/>
    <property type="evidence" value="ECO:0007669"/>
    <property type="project" value="TreeGrafter"/>
</dbReference>
<dbReference type="GO" id="GO:0005833">
    <property type="term" value="C:hemoglobin complex"/>
    <property type="evidence" value="ECO:0007669"/>
    <property type="project" value="InterPro"/>
</dbReference>
<dbReference type="GO" id="GO:0031720">
    <property type="term" value="F:haptoglobin binding"/>
    <property type="evidence" value="ECO:0007669"/>
    <property type="project" value="TreeGrafter"/>
</dbReference>
<dbReference type="GO" id="GO:0020037">
    <property type="term" value="F:heme binding"/>
    <property type="evidence" value="ECO:0007669"/>
    <property type="project" value="InterPro"/>
</dbReference>
<dbReference type="GO" id="GO:0005506">
    <property type="term" value="F:iron ion binding"/>
    <property type="evidence" value="ECO:0007669"/>
    <property type="project" value="InterPro"/>
</dbReference>
<dbReference type="GO" id="GO:0043177">
    <property type="term" value="F:organic acid binding"/>
    <property type="evidence" value="ECO:0007669"/>
    <property type="project" value="TreeGrafter"/>
</dbReference>
<dbReference type="GO" id="GO:0019825">
    <property type="term" value="F:oxygen binding"/>
    <property type="evidence" value="ECO:0007669"/>
    <property type="project" value="InterPro"/>
</dbReference>
<dbReference type="GO" id="GO:0005344">
    <property type="term" value="F:oxygen carrier activity"/>
    <property type="evidence" value="ECO:0007669"/>
    <property type="project" value="UniProtKB-KW"/>
</dbReference>
<dbReference type="GO" id="GO:0004601">
    <property type="term" value="F:peroxidase activity"/>
    <property type="evidence" value="ECO:0007669"/>
    <property type="project" value="TreeGrafter"/>
</dbReference>
<dbReference type="GO" id="GO:0042744">
    <property type="term" value="P:hydrogen peroxide catabolic process"/>
    <property type="evidence" value="ECO:0007669"/>
    <property type="project" value="TreeGrafter"/>
</dbReference>
<dbReference type="CDD" id="cd08927">
    <property type="entry name" value="Hb-alpha-like"/>
    <property type="match status" value="1"/>
</dbReference>
<dbReference type="FunFam" id="1.10.490.10:FF:000002">
    <property type="entry name" value="Hemoglobin subunit alpha"/>
    <property type="match status" value="1"/>
</dbReference>
<dbReference type="Gene3D" id="1.10.490.10">
    <property type="entry name" value="Globins"/>
    <property type="match status" value="1"/>
</dbReference>
<dbReference type="InterPro" id="IPR000971">
    <property type="entry name" value="Globin"/>
</dbReference>
<dbReference type="InterPro" id="IPR009050">
    <property type="entry name" value="Globin-like_sf"/>
</dbReference>
<dbReference type="InterPro" id="IPR012292">
    <property type="entry name" value="Globin/Proto"/>
</dbReference>
<dbReference type="InterPro" id="IPR002338">
    <property type="entry name" value="Hemoglobin_a-typ"/>
</dbReference>
<dbReference type="InterPro" id="IPR050056">
    <property type="entry name" value="Hemoglobin_oxygen_transport"/>
</dbReference>
<dbReference type="InterPro" id="IPR002339">
    <property type="entry name" value="Hemoglobin_pi"/>
</dbReference>
<dbReference type="PANTHER" id="PTHR11442">
    <property type="entry name" value="HEMOGLOBIN FAMILY MEMBER"/>
    <property type="match status" value="1"/>
</dbReference>
<dbReference type="PANTHER" id="PTHR11442:SF48">
    <property type="entry name" value="HEMOGLOBIN SUBUNIT ALPHA"/>
    <property type="match status" value="1"/>
</dbReference>
<dbReference type="Pfam" id="PF00042">
    <property type="entry name" value="Globin"/>
    <property type="match status" value="1"/>
</dbReference>
<dbReference type="PRINTS" id="PR00612">
    <property type="entry name" value="ALPHAHAEM"/>
</dbReference>
<dbReference type="PRINTS" id="PR00815">
    <property type="entry name" value="PIHAEM"/>
</dbReference>
<dbReference type="SUPFAM" id="SSF46458">
    <property type="entry name" value="Globin-like"/>
    <property type="match status" value="1"/>
</dbReference>
<dbReference type="PROSITE" id="PS01033">
    <property type="entry name" value="GLOBIN"/>
    <property type="match status" value="1"/>
</dbReference>
<proteinExistence type="evidence at protein level"/>
<organism>
    <name type="scientific">Chelonoidis niger</name>
    <name type="common">Galapagos giant tortoise</name>
    <name type="synonym">Geochelone nigra</name>
    <dbReference type="NCBI Taxonomy" id="66189"/>
    <lineage>
        <taxon>Eukaryota</taxon>
        <taxon>Metazoa</taxon>
        <taxon>Chordata</taxon>
        <taxon>Craniata</taxon>
        <taxon>Vertebrata</taxon>
        <taxon>Euteleostomi</taxon>
        <taxon>Archelosauria</taxon>
        <taxon>Testudinata</taxon>
        <taxon>Testudines</taxon>
        <taxon>Cryptodira</taxon>
        <taxon>Durocryptodira</taxon>
        <taxon>Testudinoidea</taxon>
        <taxon>Testudinidae</taxon>
        <taxon>Chelonoidis</taxon>
    </lineage>
</organism>
<evidence type="ECO:0000250" key="1">
    <source>
        <dbReference type="UniProtKB" id="P08850"/>
    </source>
</evidence>
<evidence type="ECO:0000255" key="2">
    <source>
        <dbReference type="PROSITE-ProRule" id="PRU00238"/>
    </source>
</evidence>
<evidence type="ECO:0000269" key="3">
    <source ref="2"/>
</evidence>
<evidence type="ECO:0000305" key="4"/>
<evidence type="ECO:0000312" key="5">
    <source>
        <dbReference type="EMBL" id="BAC81725.1"/>
    </source>
</evidence>